<protein>
    <recommendedName>
        <fullName>Actin, muscle</fullName>
        <ecNumber evidence="1">3.6.4.-</ecNumber>
    </recommendedName>
</protein>
<evidence type="ECO:0000250" key="1">
    <source>
        <dbReference type="UniProtKB" id="P68137"/>
    </source>
</evidence>
<evidence type="ECO:0000305" key="2"/>
<accession>P53475</accession>
<gene>
    <name type="primary">TB12</name>
</gene>
<gene>
    <name type="primary">TB34</name>
</gene>
<feature type="chain" id="PRO_0000089028" description="Actin, muscle">
    <location>
        <begin position="1"/>
        <end position="378"/>
    </location>
</feature>
<organism>
    <name type="scientific">Styela clava</name>
    <name type="common">Sea squirt</name>
    <dbReference type="NCBI Taxonomy" id="7725"/>
    <lineage>
        <taxon>Eukaryota</taxon>
        <taxon>Metazoa</taxon>
        <taxon>Chordata</taxon>
        <taxon>Tunicata</taxon>
        <taxon>Ascidiacea</taxon>
        <taxon>Stolidobranchia</taxon>
        <taxon>Styelidae</taxon>
        <taxon>Styela</taxon>
    </lineage>
</organism>
<name>ACTN_STYCL</name>
<comment type="function">
    <text>Actins are highly conserved proteins that are involved in various types of cell motility and are ubiquitously expressed in all eukaryotic cells.</text>
</comment>
<comment type="catalytic activity">
    <reaction evidence="1">
        <text>ATP + H2O = ADP + phosphate + H(+)</text>
        <dbReference type="Rhea" id="RHEA:13065"/>
        <dbReference type="ChEBI" id="CHEBI:15377"/>
        <dbReference type="ChEBI" id="CHEBI:15378"/>
        <dbReference type="ChEBI" id="CHEBI:30616"/>
        <dbReference type="ChEBI" id="CHEBI:43474"/>
        <dbReference type="ChEBI" id="CHEBI:456216"/>
    </reaction>
</comment>
<comment type="subunit">
    <text>Polymerization of globular actin (G-actin) leads to a structural filament (F-actin) in the form of a two-stranded helix. Each actin can bind to 4 others.</text>
</comment>
<comment type="subcellular location">
    <subcellularLocation>
        <location>Cytoplasm</location>
        <location>Cytoskeleton</location>
    </subcellularLocation>
</comment>
<comment type="similarity">
    <text evidence="2">Belongs to the actin family.</text>
</comment>
<dbReference type="EC" id="3.6.4.-" evidence="1"/>
<dbReference type="EMBL" id="L13790">
    <property type="protein sequence ID" value="AAA29848.1"/>
    <property type="molecule type" value="mRNA"/>
</dbReference>
<dbReference type="EMBL" id="L13787">
    <property type="protein sequence ID" value="AAA29845.1"/>
    <property type="molecule type" value="mRNA"/>
</dbReference>
<dbReference type="PIR" id="A43911">
    <property type="entry name" value="A43911"/>
</dbReference>
<dbReference type="SMR" id="P53475"/>
<dbReference type="OrthoDB" id="9922428at2759"/>
<dbReference type="GO" id="GO:0005737">
    <property type="term" value="C:cytoplasm"/>
    <property type="evidence" value="ECO:0007669"/>
    <property type="project" value="UniProtKB-KW"/>
</dbReference>
<dbReference type="GO" id="GO:0005856">
    <property type="term" value="C:cytoskeleton"/>
    <property type="evidence" value="ECO:0007669"/>
    <property type="project" value="UniProtKB-SubCell"/>
</dbReference>
<dbReference type="GO" id="GO:0005524">
    <property type="term" value="F:ATP binding"/>
    <property type="evidence" value="ECO:0007669"/>
    <property type="project" value="UniProtKB-KW"/>
</dbReference>
<dbReference type="GO" id="GO:0016787">
    <property type="term" value="F:hydrolase activity"/>
    <property type="evidence" value="ECO:0007669"/>
    <property type="project" value="UniProtKB-KW"/>
</dbReference>
<dbReference type="CDD" id="cd10224">
    <property type="entry name" value="ASKHA_NBD_actin"/>
    <property type="match status" value="1"/>
</dbReference>
<dbReference type="FunFam" id="2.30.36.70:FF:000001">
    <property type="entry name" value="Actin, alpha skeletal muscle"/>
    <property type="match status" value="1"/>
</dbReference>
<dbReference type="FunFam" id="3.30.420.40:FF:000131">
    <property type="entry name" value="Actin, alpha skeletal muscle"/>
    <property type="match status" value="1"/>
</dbReference>
<dbReference type="FunFam" id="3.30.420.40:FF:000291">
    <property type="entry name" value="Actin, alpha skeletal muscle"/>
    <property type="match status" value="1"/>
</dbReference>
<dbReference type="FunFam" id="3.90.640.10:FF:000047">
    <property type="entry name" value="Actin, alpha skeletal muscle"/>
    <property type="match status" value="1"/>
</dbReference>
<dbReference type="FunFam" id="3.30.420.40:FF:000058">
    <property type="entry name" value="Putative actin-related protein 5"/>
    <property type="match status" value="1"/>
</dbReference>
<dbReference type="Gene3D" id="3.30.420.40">
    <property type="match status" value="2"/>
</dbReference>
<dbReference type="Gene3D" id="3.90.640.10">
    <property type="entry name" value="Actin, Chain A, domain 4"/>
    <property type="match status" value="1"/>
</dbReference>
<dbReference type="InterPro" id="IPR004000">
    <property type="entry name" value="Actin"/>
</dbReference>
<dbReference type="InterPro" id="IPR020902">
    <property type="entry name" value="Actin/actin-like_CS"/>
</dbReference>
<dbReference type="InterPro" id="IPR004001">
    <property type="entry name" value="Actin_CS"/>
</dbReference>
<dbReference type="InterPro" id="IPR043129">
    <property type="entry name" value="ATPase_NBD"/>
</dbReference>
<dbReference type="PANTHER" id="PTHR11937">
    <property type="entry name" value="ACTIN"/>
    <property type="match status" value="1"/>
</dbReference>
<dbReference type="Pfam" id="PF00022">
    <property type="entry name" value="Actin"/>
    <property type="match status" value="1"/>
</dbReference>
<dbReference type="PRINTS" id="PR00190">
    <property type="entry name" value="ACTIN"/>
</dbReference>
<dbReference type="SMART" id="SM00268">
    <property type="entry name" value="ACTIN"/>
    <property type="match status" value="1"/>
</dbReference>
<dbReference type="SUPFAM" id="SSF53067">
    <property type="entry name" value="Actin-like ATPase domain"/>
    <property type="match status" value="2"/>
</dbReference>
<dbReference type="PROSITE" id="PS00406">
    <property type="entry name" value="ACTINS_1"/>
    <property type="match status" value="1"/>
</dbReference>
<dbReference type="PROSITE" id="PS00432">
    <property type="entry name" value="ACTINS_2"/>
    <property type="match status" value="1"/>
</dbReference>
<dbReference type="PROSITE" id="PS01132">
    <property type="entry name" value="ACTINS_ACT_LIKE"/>
    <property type="match status" value="1"/>
</dbReference>
<proteinExistence type="evidence at transcript level"/>
<keyword id="KW-0067">ATP-binding</keyword>
<keyword id="KW-0963">Cytoplasm</keyword>
<keyword id="KW-0206">Cytoskeleton</keyword>
<keyword id="KW-0378">Hydrolase</keyword>
<keyword id="KW-0514">Muscle protein</keyword>
<keyword id="KW-0547">Nucleotide-binding</keyword>
<reference key="1">
    <citation type="journal article" date="1992" name="Dev. Biol.">
        <title>Multiple actin genes encoding the same alpha-muscle isoform are expressed during ascidian development.</title>
        <authorList>
            <person name="Beach R.L."/>
            <person name="Jeffery W.R."/>
        </authorList>
    </citation>
    <scope>NUCLEOTIDE SEQUENCE [MRNA]</scope>
</reference>
<sequence>MSDGEEDQTAIVCDNGSGLVKSGFAGDDAPRAVFPSIVGRPRHQGVMVGMGQKDSYVGDEAQSKRGILTLKYPIEHGIITNWDDMEKIWHHTMYNELRVAPEEHPTLLTEAPLNPKANREKMTQIMFETFNVPAMYVAIQAVLSLYASGRTTGIVMDAGDGVSHNVPIYEGYALPHAIARLDLAGRDLTDYLMKILTERGYSFVTTAEREIVRDIKEKLCYVALDFEQEMATAASSTSLEKSYELPDGQVITIGNERFRCPETLFQPSFIGMESAGIHETTYNSIMKCDIDIRKDLYANNVLSGGTTMYPGIADRMQKEITALAPSTMKIKIIAPPERKYSVWIGGSILASLSTFQQMWISKQEYDEAGPSIVHRKCF</sequence>